<comment type="function">
    <text evidence="1">Essential for recycling GMP and indirectly, cGMP.</text>
</comment>
<comment type="catalytic activity">
    <reaction>
        <text>GMP + ATP = GDP + ADP</text>
        <dbReference type="Rhea" id="RHEA:20780"/>
        <dbReference type="ChEBI" id="CHEBI:30616"/>
        <dbReference type="ChEBI" id="CHEBI:58115"/>
        <dbReference type="ChEBI" id="CHEBI:58189"/>
        <dbReference type="ChEBI" id="CHEBI:456216"/>
        <dbReference type="EC" id="2.7.4.8"/>
    </reaction>
</comment>
<comment type="subcellular location">
    <subcellularLocation>
        <location evidence="1">Cytoplasm</location>
    </subcellularLocation>
</comment>
<comment type="similarity">
    <text evidence="2">Belongs to the guanylate kinase family.</text>
</comment>
<keyword id="KW-0067">ATP-binding</keyword>
<keyword id="KW-0963">Cytoplasm</keyword>
<keyword id="KW-0418">Kinase</keyword>
<keyword id="KW-0547">Nucleotide-binding</keyword>
<keyword id="KW-0808">Transferase</keyword>
<feature type="chain" id="PRO_0000170595" description="Guanylate kinase">
    <location>
        <begin position="1"/>
        <end position="229"/>
    </location>
</feature>
<feature type="domain" description="RPE1 insert">
    <location>
        <begin position="7"/>
        <end position="42"/>
    </location>
</feature>
<feature type="domain" description="Guanylate kinase-like">
    <location>
        <begin position="44"/>
        <end position="222"/>
    </location>
</feature>
<feature type="binding site" evidence="1">
    <location>
        <begin position="51"/>
        <end position="58"/>
    </location>
    <ligand>
        <name>ATP</name>
        <dbReference type="ChEBI" id="CHEBI:30616"/>
    </ligand>
</feature>
<gene>
    <name type="primary">gmk</name>
    <name type="ordered locus">RC1194</name>
</gene>
<sequence>MTTKNKRVLQKCAYREEFKGDMERSTAATSKLPLEVELSRNSKGLIIILSSPSGTGKSSLAKALLKIDNNLRLSISATTRKPRLGEVEGINYYFKTGLEFEELVKQNKFLEYAKIYDNYYGTPKEYVEMLLNQGLDVLFDIDWQGARSIKKNATNVVTIFVLPPNIEVLEQRLRNRATDNEEAIKLRMQLAQNEISHANEYDYVVTNDDFDRTLKKIHAIIVAARDKAF</sequence>
<evidence type="ECO:0000250" key="1"/>
<evidence type="ECO:0000305" key="2"/>
<protein>
    <recommendedName>
        <fullName>Guanylate kinase</fullName>
        <ecNumber>2.7.4.8</ecNumber>
    </recommendedName>
    <alternativeName>
        <fullName>GMP kinase</fullName>
    </alternativeName>
</protein>
<organism>
    <name type="scientific">Rickettsia conorii (strain ATCC VR-613 / Malish 7)</name>
    <dbReference type="NCBI Taxonomy" id="272944"/>
    <lineage>
        <taxon>Bacteria</taxon>
        <taxon>Pseudomonadati</taxon>
        <taxon>Pseudomonadota</taxon>
        <taxon>Alphaproteobacteria</taxon>
        <taxon>Rickettsiales</taxon>
        <taxon>Rickettsiaceae</taxon>
        <taxon>Rickettsieae</taxon>
        <taxon>Rickettsia</taxon>
        <taxon>spotted fever group</taxon>
    </lineage>
</organism>
<reference key="1">
    <citation type="journal article" date="2001" name="Science">
        <title>Mechanisms of evolution in Rickettsia conorii and R. prowazekii.</title>
        <authorList>
            <person name="Ogata H."/>
            <person name="Audic S."/>
            <person name="Renesto-Audiffren P."/>
            <person name="Fournier P.-E."/>
            <person name="Barbe V."/>
            <person name="Samson D."/>
            <person name="Roux V."/>
            <person name="Cossart P."/>
            <person name="Weissenbach J."/>
            <person name="Claverie J.-M."/>
            <person name="Raoult D."/>
        </authorList>
    </citation>
    <scope>NUCLEOTIDE SEQUENCE [LARGE SCALE GENOMIC DNA]</scope>
    <source>
        <strain>ATCC VR-613 / Malish 7</strain>
    </source>
</reference>
<dbReference type="EC" id="2.7.4.8"/>
<dbReference type="EMBL" id="AE006914">
    <property type="protein sequence ID" value="AAL03732.1"/>
    <property type="molecule type" value="Genomic_DNA"/>
</dbReference>
<dbReference type="PIR" id="B97849">
    <property type="entry name" value="B97849"/>
</dbReference>
<dbReference type="RefSeq" id="WP_010977760.1">
    <property type="nucleotide sequence ID" value="NC_003103.1"/>
</dbReference>
<dbReference type="SMR" id="Q92GC9"/>
<dbReference type="GeneID" id="928341"/>
<dbReference type="KEGG" id="rco:RC1194"/>
<dbReference type="HOGENOM" id="CLU_001715_1_0_5"/>
<dbReference type="BRENDA" id="2.7.4.8">
    <property type="organism ID" value="5446"/>
</dbReference>
<dbReference type="Proteomes" id="UP000000816">
    <property type="component" value="Chromosome"/>
</dbReference>
<dbReference type="GO" id="GO:0005829">
    <property type="term" value="C:cytosol"/>
    <property type="evidence" value="ECO:0007669"/>
    <property type="project" value="TreeGrafter"/>
</dbReference>
<dbReference type="GO" id="GO:0005524">
    <property type="term" value="F:ATP binding"/>
    <property type="evidence" value="ECO:0007669"/>
    <property type="project" value="UniProtKB-UniRule"/>
</dbReference>
<dbReference type="GO" id="GO:0004385">
    <property type="term" value="F:guanylate kinase activity"/>
    <property type="evidence" value="ECO:0007669"/>
    <property type="project" value="UniProtKB-UniRule"/>
</dbReference>
<dbReference type="CDD" id="cd00071">
    <property type="entry name" value="GMPK"/>
    <property type="match status" value="1"/>
</dbReference>
<dbReference type="FunFam" id="3.30.63.10:FF:000002">
    <property type="entry name" value="Guanylate kinase 1"/>
    <property type="match status" value="1"/>
</dbReference>
<dbReference type="Gene3D" id="3.30.63.10">
    <property type="entry name" value="Guanylate Kinase phosphate binding domain"/>
    <property type="match status" value="1"/>
</dbReference>
<dbReference type="Gene3D" id="3.40.50.300">
    <property type="entry name" value="P-loop containing nucleotide triphosphate hydrolases"/>
    <property type="match status" value="1"/>
</dbReference>
<dbReference type="HAMAP" id="MF_00328">
    <property type="entry name" value="Guanylate_kinase"/>
    <property type="match status" value="1"/>
</dbReference>
<dbReference type="InterPro" id="IPR008145">
    <property type="entry name" value="GK/Ca_channel_bsu"/>
</dbReference>
<dbReference type="InterPro" id="IPR008144">
    <property type="entry name" value="Guanylate_kin-like_dom"/>
</dbReference>
<dbReference type="InterPro" id="IPR017665">
    <property type="entry name" value="Guanylate_kinase"/>
</dbReference>
<dbReference type="InterPro" id="IPR020590">
    <property type="entry name" value="Guanylate_kinase_CS"/>
</dbReference>
<dbReference type="InterPro" id="IPR027417">
    <property type="entry name" value="P-loop_NTPase"/>
</dbReference>
<dbReference type="InterPro" id="IPR005728">
    <property type="entry name" value="RPE1"/>
</dbReference>
<dbReference type="NCBIfam" id="TIGR03263">
    <property type="entry name" value="guanyl_kin"/>
    <property type="match status" value="1"/>
</dbReference>
<dbReference type="NCBIfam" id="TIGR01045">
    <property type="entry name" value="RPE1"/>
    <property type="match status" value="1"/>
</dbReference>
<dbReference type="PANTHER" id="PTHR23117:SF13">
    <property type="entry name" value="GUANYLATE KINASE"/>
    <property type="match status" value="1"/>
</dbReference>
<dbReference type="PANTHER" id="PTHR23117">
    <property type="entry name" value="GUANYLATE KINASE-RELATED"/>
    <property type="match status" value="1"/>
</dbReference>
<dbReference type="Pfam" id="PF00625">
    <property type="entry name" value="Guanylate_kin"/>
    <property type="match status" value="1"/>
</dbReference>
<dbReference type="SMART" id="SM00072">
    <property type="entry name" value="GuKc"/>
    <property type="match status" value="1"/>
</dbReference>
<dbReference type="SUPFAM" id="SSF52540">
    <property type="entry name" value="P-loop containing nucleoside triphosphate hydrolases"/>
    <property type="match status" value="1"/>
</dbReference>
<dbReference type="PROSITE" id="PS00856">
    <property type="entry name" value="GUANYLATE_KINASE_1"/>
    <property type="match status" value="1"/>
</dbReference>
<dbReference type="PROSITE" id="PS50052">
    <property type="entry name" value="GUANYLATE_KINASE_2"/>
    <property type="match status" value="1"/>
</dbReference>
<name>KGUA_RICCN</name>
<proteinExistence type="inferred from homology"/>
<accession>Q92GC9</accession>